<keyword id="KW-0903">Direct protein sequencing</keyword>
<feature type="chain" id="PRO_0000170482" description="Alkaline shock protein 23">
    <location>
        <begin position="1"/>
        <end position="169"/>
    </location>
</feature>
<feature type="region of interest" description="Disordered" evidence="1">
    <location>
        <begin position="1"/>
        <end position="40"/>
    </location>
</feature>
<feature type="region of interest" description="Disordered" evidence="1">
    <location>
        <begin position="148"/>
        <end position="169"/>
    </location>
</feature>
<feature type="compositionally biased region" description="Basic and acidic residues" evidence="1">
    <location>
        <begin position="19"/>
        <end position="29"/>
    </location>
</feature>
<feature type="compositionally biased region" description="Basic and acidic residues" evidence="1">
    <location>
        <begin position="148"/>
        <end position="158"/>
    </location>
</feature>
<feature type="compositionally biased region" description="Low complexity" evidence="1">
    <location>
        <begin position="159"/>
        <end position="169"/>
    </location>
</feature>
<reference key="1">
    <citation type="journal article" date="1995" name="Biochem. Biophys. Res. Commun.">
        <title>Isolation and the gene cloning of an alkaline shock protein in methicillin resistant Staphylococcus aureus.</title>
        <authorList>
            <person name="Kuroda M."/>
            <person name="Ohta T."/>
            <person name="Hayashi H."/>
        </authorList>
    </citation>
    <scope>NUCLEOTIDE SEQUENCE [GENOMIC DNA]</scope>
    <scope>PARTIAL PROTEIN SEQUENCE</scope>
</reference>
<protein>
    <recommendedName>
        <fullName>Alkaline shock protein 23</fullName>
    </recommendedName>
</protein>
<gene>
    <name type="primary">asp23</name>
</gene>
<proteinExistence type="evidence at protein level"/>
<comment type="function">
    <text>May play a key role in alkaline pH tolerance.</text>
</comment>
<comment type="induction">
    <text>Expression enhanced by a pH upshift from 7 to 10.</text>
</comment>
<comment type="similarity">
    <text evidence="2">Belongs to the asp23 family.</text>
</comment>
<name>ASP23_STAAU</name>
<accession>P0A0P8</accession>
<accession>Q53485</accession>
<sequence>MTVDNNKAKQAYDNQTGVNEKEREERQKQQEQNQEPQFKNKLTFSDEVVEKIAGIAAREVKGILDMKGGLTDTFTNAFSSGNNVTQGVSVEVGEKQAAVDLKVILEYGESAPKIFRKVTELVKEQVKYITGLDVVEVNMQVDDVMTQKEWKQKHEKNNENNNQERQGLQ</sequence>
<evidence type="ECO:0000256" key="1">
    <source>
        <dbReference type="SAM" id="MobiDB-lite"/>
    </source>
</evidence>
<evidence type="ECO:0000305" key="2"/>
<dbReference type="EMBL" id="S76213">
    <property type="protein sequence ID" value="AAB33482.1"/>
    <property type="molecule type" value="Genomic_DNA"/>
</dbReference>
<dbReference type="PIR" id="JC2527">
    <property type="entry name" value="JC2527"/>
</dbReference>
<dbReference type="RefSeq" id="WP_000215236.1">
    <property type="nucleotide sequence ID" value="NZ_WYDB01000011.1"/>
</dbReference>
<dbReference type="SMR" id="P0A0P8"/>
<dbReference type="OMA" id="VISAVEW"/>
<dbReference type="InterPro" id="IPR005531">
    <property type="entry name" value="Asp23"/>
</dbReference>
<dbReference type="PANTHER" id="PTHR34297:SF3">
    <property type="entry name" value="ALKALINE SHOCK PROTEIN 23"/>
    <property type="match status" value="1"/>
</dbReference>
<dbReference type="PANTHER" id="PTHR34297">
    <property type="entry name" value="HYPOTHETICAL CYTOSOLIC PROTEIN-RELATED"/>
    <property type="match status" value="1"/>
</dbReference>
<dbReference type="Pfam" id="PF03780">
    <property type="entry name" value="Asp23"/>
    <property type="match status" value="1"/>
</dbReference>
<organism>
    <name type="scientific">Staphylococcus aureus</name>
    <dbReference type="NCBI Taxonomy" id="1280"/>
    <lineage>
        <taxon>Bacteria</taxon>
        <taxon>Bacillati</taxon>
        <taxon>Bacillota</taxon>
        <taxon>Bacilli</taxon>
        <taxon>Bacillales</taxon>
        <taxon>Staphylococcaceae</taxon>
        <taxon>Staphylococcus</taxon>
    </lineage>
</organism>